<gene>
    <name type="primary">hh2b</name>
    <name type="ORF">NCU02435</name>
</gene>
<evidence type="ECO:0000250" key="1"/>
<evidence type="ECO:0000256" key="2">
    <source>
        <dbReference type="SAM" id="MobiDB-lite"/>
    </source>
</evidence>
<evidence type="ECO:0000305" key="3"/>
<name>H2B_NEUCR</name>
<reference key="1">
    <citation type="journal article" date="2002" name="Genetics">
        <title>Identification and characterization of the genes encoding the core histones and histone variants of Neurospora crassa.</title>
        <authorList>
            <person name="Hays S.M."/>
            <person name="Swanson J."/>
            <person name="Selker E.U."/>
        </authorList>
    </citation>
    <scope>NUCLEOTIDE SEQUENCE [GENOMIC DNA]</scope>
</reference>
<reference key="2">
    <citation type="journal article" date="2003" name="Nature">
        <title>The genome sequence of the filamentous fungus Neurospora crassa.</title>
        <authorList>
            <person name="Galagan J.E."/>
            <person name="Calvo S.E."/>
            <person name="Borkovich K.A."/>
            <person name="Selker E.U."/>
            <person name="Read N.D."/>
            <person name="Jaffe D.B."/>
            <person name="FitzHugh W."/>
            <person name="Ma L.-J."/>
            <person name="Smirnov S."/>
            <person name="Purcell S."/>
            <person name="Rehman B."/>
            <person name="Elkins T."/>
            <person name="Engels R."/>
            <person name="Wang S."/>
            <person name="Nielsen C.B."/>
            <person name="Butler J."/>
            <person name="Endrizzi M."/>
            <person name="Qui D."/>
            <person name="Ianakiev P."/>
            <person name="Bell-Pedersen D."/>
            <person name="Nelson M.A."/>
            <person name="Werner-Washburne M."/>
            <person name="Selitrennikoff C.P."/>
            <person name="Kinsey J.A."/>
            <person name="Braun E.L."/>
            <person name="Zelter A."/>
            <person name="Schulte U."/>
            <person name="Kothe G.O."/>
            <person name="Jedd G."/>
            <person name="Mewes H.-W."/>
            <person name="Staben C."/>
            <person name="Marcotte E."/>
            <person name="Greenberg D."/>
            <person name="Roy A."/>
            <person name="Foley K."/>
            <person name="Naylor J."/>
            <person name="Stange-Thomann N."/>
            <person name="Barrett R."/>
            <person name="Gnerre S."/>
            <person name="Kamal M."/>
            <person name="Kamvysselis M."/>
            <person name="Mauceli E.W."/>
            <person name="Bielke C."/>
            <person name="Rudd S."/>
            <person name="Frishman D."/>
            <person name="Krystofova S."/>
            <person name="Rasmussen C."/>
            <person name="Metzenberg R.L."/>
            <person name="Perkins D.D."/>
            <person name="Kroken S."/>
            <person name="Cogoni C."/>
            <person name="Macino G."/>
            <person name="Catcheside D.E.A."/>
            <person name="Li W."/>
            <person name="Pratt R.J."/>
            <person name="Osmani S.A."/>
            <person name="DeSouza C.P.C."/>
            <person name="Glass N.L."/>
            <person name="Orbach M.J."/>
            <person name="Berglund J.A."/>
            <person name="Voelker R."/>
            <person name="Yarden O."/>
            <person name="Plamann M."/>
            <person name="Seiler S."/>
            <person name="Dunlap J.C."/>
            <person name="Radford A."/>
            <person name="Aramayo R."/>
            <person name="Natvig D.O."/>
            <person name="Alex L.A."/>
            <person name="Mannhaupt G."/>
            <person name="Ebbole D.J."/>
            <person name="Freitag M."/>
            <person name="Paulsen I."/>
            <person name="Sachs M.S."/>
            <person name="Lander E.S."/>
            <person name="Nusbaum C."/>
            <person name="Birren B.W."/>
        </authorList>
    </citation>
    <scope>NUCLEOTIDE SEQUENCE [LARGE SCALE GENOMIC DNA]</scope>
    <source>
        <strain>ATCC 24698 / 74-OR23-1A / CBS 708.71 / DSM 1257 / FGSC 987</strain>
    </source>
</reference>
<reference key="3">
    <citation type="journal article" date="1986" name="Biokhimiia">
        <title>Some peculiarities of primary structure of histone H2b of the mould fungus Neurospora crassa.</title>
        <authorList>
            <person name="Karpova O.I."/>
            <person name="Ananyeva N.M."/>
            <person name="Ermokhina T.M."/>
            <person name="Krasheninnikov I.A."/>
        </authorList>
    </citation>
    <scope>PROTEIN SEQUENCE OF 43-137</scope>
    <source>
        <strain>ATCC 32313 / FGSC 327</strain>
    </source>
</reference>
<accession>P37210</accession>
<accession>Q7S3Y6</accession>
<accession>Q8X131</accession>
<dbReference type="EMBL" id="AY062171">
    <property type="protein sequence ID" value="AAL38971.1"/>
    <property type="molecule type" value="Genomic_DNA"/>
</dbReference>
<dbReference type="EMBL" id="CM002242">
    <property type="protein sequence ID" value="EAA30204.1"/>
    <property type="molecule type" value="Genomic_DNA"/>
</dbReference>
<dbReference type="PIR" id="PN0142">
    <property type="entry name" value="PN0142"/>
</dbReference>
<dbReference type="RefSeq" id="XP_959440.1">
    <property type="nucleotide sequence ID" value="XM_954347.3"/>
</dbReference>
<dbReference type="SMR" id="P37210"/>
<dbReference type="DIP" id="DIP-59936N"/>
<dbReference type="FunCoup" id="P37210">
    <property type="interactions" value="942"/>
</dbReference>
<dbReference type="IntAct" id="P37210">
    <property type="interactions" value="1"/>
</dbReference>
<dbReference type="STRING" id="367110.P37210"/>
<dbReference type="PaxDb" id="5141-EFNCRP00000003257"/>
<dbReference type="EnsemblFungi" id="EAA30204">
    <property type="protein sequence ID" value="EAA30204"/>
    <property type="gene ID" value="NCU02435"/>
</dbReference>
<dbReference type="GeneID" id="3875587"/>
<dbReference type="KEGG" id="ncr:NCU02435"/>
<dbReference type="VEuPathDB" id="FungiDB:NCU02435"/>
<dbReference type="HOGENOM" id="CLU_075666_1_3_1"/>
<dbReference type="InParanoid" id="P37210"/>
<dbReference type="OMA" id="FCPFAIR"/>
<dbReference type="OrthoDB" id="10254238at2759"/>
<dbReference type="Proteomes" id="UP000001805">
    <property type="component" value="Chromosome 7, Linkage Group VII"/>
</dbReference>
<dbReference type="GO" id="GO:0000786">
    <property type="term" value="C:nucleosome"/>
    <property type="evidence" value="ECO:0007669"/>
    <property type="project" value="UniProtKB-KW"/>
</dbReference>
<dbReference type="GO" id="GO:0005634">
    <property type="term" value="C:nucleus"/>
    <property type="evidence" value="ECO:0007669"/>
    <property type="project" value="UniProtKB-SubCell"/>
</dbReference>
<dbReference type="GO" id="GO:0003677">
    <property type="term" value="F:DNA binding"/>
    <property type="evidence" value="ECO:0000318"/>
    <property type="project" value="GO_Central"/>
</dbReference>
<dbReference type="GO" id="GO:0046982">
    <property type="term" value="F:protein heterodimerization activity"/>
    <property type="evidence" value="ECO:0007669"/>
    <property type="project" value="InterPro"/>
</dbReference>
<dbReference type="GO" id="GO:0030527">
    <property type="term" value="F:structural constituent of chromatin"/>
    <property type="evidence" value="ECO:0007669"/>
    <property type="project" value="InterPro"/>
</dbReference>
<dbReference type="CDD" id="cd22910">
    <property type="entry name" value="HFD_H2B"/>
    <property type="match status" value="1"/>
</dbReference>
<dbReference type="FunFam" id="1.10.20.10:FF:000014">
    <property type="entry name" value="Histone H2B"/>
    <property type="match status" value="1"/>
</dbReference>
<dbReference type="Gene3D" id="1.10.20.10">
    <property type="entry name" value="Histone, subunit A"/>
    <property type="match status" value="1"/>
</dbReference>
<dbReference type="InterPro" id="IPR009072">
    <property type="entry name" value="Histone-fold"/>
</dbReference>
<dbReference type="InterPro" id="IPR007125">
    <property type="entry name" value="Histone_H2A/H2B/H3"/>
</dbReference>
<dbReference type="InterPro" id="IPR000558">
    <property type="entry name" value="Histone_H2B"/>
</dbReference>
<dbReference type="InterPro" id="IPR055333">
    <property type="entry name" value="HISTONE_H2B_site"/>
</dbReference>
<dbReference type="PANTHER" id="PTHR23428">
    <property type="entry name" value="HISTONE H2B"/>
    <property type="match status" value="1"/>
</dbReference>
<dbReference type="Pfam" id="PF00125">
    <property type="entry name" value="Histone"/>
    <property type="match status" value="1"/>
</dbReference>
<dbReference type="PRINTS" id="PR00621">
    <property type="entry name" value="HISTONEH2B"/>
</dbReference>
<dbReference type="SMART" id="SM00427">
    <property type="entry name" value="H2B"/>
    <property type="match status" value="1"/>
</dbReference>
<dbReference type="SUPFAM" id="SSF47113">
    <property type="entry name" value="Histone-fold"/>
    <property type="match status" value="1"/>
</dbReference>
<dbReference type="PROSITE" id="PS00357">
    <property type="entry name" value="HISTONE_H2B"/>
    <property type="match status" value="1"/>
</dbReference>
<proteinExistence type="evidence at protein level"/>
<keyword id="KW-0007">Acetylation</keyword>
<keyword id="KW-0158">Chromosome</keyword>
<keyword id="KW-0903">Direct protein sequencing</keyword>
<keyword id="KW-0238">DNA-binding</keyword>
<keyword id="KW-1017">Isopeptide bond</keyword>
<keyword id="KW-0544">Nucleosome core</keyword>
<keyword id="KW-0539">Nucleus</keyword>
<keyword id="KW-0597">Phosphoprotein</keyword>
<keyword id="KW-1185">Reference proteome</keyword>
<keyword id="KW-0832">Ubl conjugation</keyword>
<feature type="initiator methionine" description="Removed" evidence="1">
    <location>
        <position position="1"/>
    </location>
</feature>
<feature type="chain" id="PRO_0000071935" description="Histone H2B">
    <location>
        <begin position="2"/>
        <end position="137"/>
    </location>
</feature>
<feature type="region of interest" description="Disordered" evidence="2">
    <location>
        <begin position="1"/>
        <end position="45"/>
    </location>
</feature>
<feature type="compositionally biased region" description="Basic and acidic residues" evidence="2">
    <location>
        <begin position="1"/>
        <end position="10"/>
    </location>
</feature>
<feature type="modified residue" description="N6-acetyllysine; alternate" evidence="1">
    <location>
        <position position="8"/>
    </location>
</feature>
<feature type="modified residue" description="N6-acetyllysine; alternate" evidence="1">
    <location>
        <position position="9"/>
    </location>
</feature>
<feature type="modified residue" description="Phosphoserine" evidence="1">
    <location>
        <position position="12"/>
    </location>
</feature>
<feature type="modified residue" description="N6-acetyllysine" evidence="1">
    <location>
        <position position="13"/>
    </location>
</feature>
<feature type="modified residue" description="N6-acetyllysine; alternate" evidence="1">
    <location>
        <position position="24"/>
    </location>
</feature>
<feature type="cross-link" description="Glycyl lysine isopeptide (Lys-Gly) (interchain with G-Cter in SUMO); alternate" evidence="1">
    <location>
        <position position="8"/>
    </location>
</feature>
<feature type="cross-link" description="Glycyl lysine isopeptide (Lys-Gly) (interchain with G-Cter in SUMO); alternate" evidence="1">
    <location>
        <position position="9"/>
    </location>
</feature>
<feature type="cross-link" description="Glycyl lysine isopeptide (Lys-Gly) (interchain with G-Cter in SUMO); alternate" evidence="1">
    <location>
        <position position="24"/>
    </location>
</feature>
<feature type="cross-link" description="Glycyl lysine isopeptide (Lys-Gly) (interchain with G-Cter in SUMO)" evidence="1">
    <location>
        <position position="25"/>
    </location>
</feature>
<feature type="cross-link" description="Glycyl lysine isopeptide (Lys-Gly) (interchain with G-Cter in ubiquitin)" evidence="1">
    <location>
        <position position="131"/>
    </location>
</feature>
<feature type="sequence conflict" description="In Ref. 3; AA sequence." evidence="3" ref="3">
    <original>RA</original>
    <variation>KS</variation>
    <location>
        <begin position="68"/>
        <end position="69"/>
    </location>
</feature>
<feature type="sequence conflict" description="In Ref. 3; AA sequence." evidence="3" ref="3">
    <original>S</original>
    <variation>T</variation>
    <location>
        <position position="133"/>
    </location>
</feature>
<feature type="sequence conflict" description="In Ref. 3; AA sequence." evidence="3" ref="3">
    <location>
        <position position="136"/>
    </location>
</feature>
<organism>
    <name type="scientific">Neurospora crassa (strain ATCC 24698 / 74-OR23-1A / CBS 708.71 / DSM 1257 / FGSC 987)</name>
    <dbReference type="NCBI Taxonomy" id="367110"/>
    <lineage>
        <taxon>Eukaryota</taxon>
        <taxon>Fungi</taxon>
        <taxon>Dikarya</taxon>
        <taxon>Ascomycota</taxon>
        <taxon>Pezizomycotina</taxon>
        <taxon>Sordariomycetes</taxon>
        <taxon>Sordariomycetidae</taxon>
        <taxon>Sordariales</taxon>
        <taxon>Sordariaceae</taxon>
        <taxon>Neurospora</taxon>
    </lineage>
</organism>
<comment type="function">
    <text>Core component of nucleosome. Nucleosomes wrap and compact DNA into chromatin, limiting DNA accessibility to the cellular machineries which require DNA as a template. Histones thereby play a central role in transcription regulation, DNA repair, DNA replication and chromosomal stability. DNA accessibility is regulated via a complex set of post-translational modifications of histones, also called histone code, and nucleosome remodeling.</text>
</comment>
<comment type="subunit">
    <text>The nucleosome is a histone octamer containing two molecules each of H2A, H2B, H3 and H4 assembled in one H3-H4 heterotetramer and two H2A-H2B heterodimers. The octamer wraps approximately 147 bp of DNA.</text>
</comment>
<comment type="subcellular location">
    <subcellularLocation>
        <location>Nucleus</location>
    </subcellularLocation>
    <subcellularLocation>
        <location>Chromosome</location>
    </subcellularLocation>
</comment>
<comment type="PTM">
    <text evidence="1">Monoubiquitinated by the ubc-2-bre-1 complex to form H2BK123ub1. H2BK123ub1 gives a specific tag for epigenetic transcriptional activation and is also prerequisite for H3K4me and H3K79me formation. H2BK123ub1 also modulates the formation of double-strand breaks during meiosis and is a prerequisite for DNA-damage checkpoint activation (By similarity).</text>
</comment>
<comment type="PTM">
    <text evidence="1">Phosphorylated by ste-20 to form H2BS10ph during progression through meiotic prophase. May be correlated with chromosome condensation (By similarity).</text>
</comment>
<comment type="PTM">
    <text evidence="1">Acetylated by gcn-5 to form H2BK11ac and H2BK16ac. H2BK16ac can also be formed by esa-1. Acetylation of N-terminal lysines and particularly formation of H2BK11acK16ac has a positive effect on transcription (By similarity).</text>
</comment>
<comment type="PTM">
    <text evidence="1">Sumoylation to form H2BK6su or H2BK7su, and probably also H2BK16su or H2BK17su, occurs preferentially near the telomeres and represses gene transcription.</text>
</comment>
<comment type="similarity">
    <text evidence="3">Belongs to the histone H2B family.</text>
</comment>
<comment type="caution">
    <text evidence="3">To ensure consistency between histone entries, we follow the 'Brno' nomenclature for histone modifications, with positions referring to those used in the literature for the 'closest' model organism. Due to slight variations in histone sequences between organisms and to the presence of initiator methionine in UniProtKB/Swiss-Prot sequences, the actual positions of modified amino acids in the sequence generally differ. In this entry the following conventions are used: H2BK6ac = acetylated Lys-8; H2BK6su = sumoylated Lys-8; H2BK7ac = acetylated Lys-9; H2BK7su = sumoylated Lys-9; H2BS10ph = phosphorylated Ser-12; H2BK11ac = acetylated Lys-13; H2BK16ac = acetylated Lys-24; H2BK16su = sumoylated Lys-24; H2BK17su = sumoylated Lys-25; H2BK123ub1 = monoubiquitinated Lys-131.</text>
</comment>
<protein>
    <recommendedName>
        <fullName>Histone H2B</fullName>
    </recommendedName>
</protein>
<sequence length="137" mass="14841">MPPKPADKKPASKAPATASKAPEKKDAGKKTAASGDKKKRTKARKETYSSYIYKVLKQVHPDTGISNRAMSILNSFVNDIFERVATEASKLAAYNKKSTISSREIQTSVRLILPGELAKHAVSEGTKAVTKYSSSTK</sequence>